<proteinExistence type="evidence at protein level"/>
<organism evidence="12">
    <name type="scientific">Canis lupus familiaris</name>
    <name type="common">Dog</name>
    <name type="synonym">Canis familiaris</name>
    <dbReference type="NCBI Taxonomy" id="9615"/>
    <lineage>
        <taxon>Eukaryota</taxon>
        <taxon>Metazoa</taxon>
        <taxon>Chordata</taxon>
        <taxon>Craniata</taxon>
        <taxon>Vertebrata</taxon>
        <taxon>Euteleostomi</taxon>
        <taxon>Mammalia</taxon>
        <taxon>Eutheria</taxon>
        <taxon>Laurasiatheria</taxon>
        <taxon>Carnivora</taxon>
        <taxon>Caniformia</taxon>
        <taxon>Canidae</taxon>
        <taxon>Canis</taxon>
    </lineage>
</organism>
<gene>
    <name evidence="2" type="primary">INPPL1</name>
    <name evidence="10" type="synonym">SHIP2</name>
</gene>
<name>SHIP2_CANLF</name>
<comment type="function">
    <text evidence="2 3 5 9">Phosphatidylinositol (PtdIns) phosphatase that specifically hydrolyzes the 5-phosphate of phosphatidylinositol-3,4,5-trisphosphate (PtdIns(3,4,5)P3) to produce PtdIns(3,4)P2, thereby negatively regulating the PI3K (phosphoinositide 3-kinase) pathways (By similarity). Required for correct mitotic spindle orientation and therefore progression of mitosis (PubMed:27926875). Plays a central role in regulation of PI3K-dependent insulin signaling, although the precise molecular mechanisms and signaling pathways remain unclear (By similarity). While overexpression reduces both insulin-stimulated MAP kinase and Akt activation, its absence does not affect insulin signaling or GLUT4 trafficking (By similarity). Confers resistance to dietary obesity (By similarity). May act by regulating AKT2, but not AKT1, phosphorylation at the plasma membrane. Part of a signaling pathway that regulates actin cytoskeleton remodeling (By similarity). Required for the maintenance and dynamic remodeling of actin structures as well as in endocytosis, having a major impact on ligand-induced EGFR internalization and degradation (By similarity). Participates in regulation of cortical and submembraneous actin by hydrolyzing PtdIns(3,4,5)P3 thereby regulating membrane ruffling (By similarity). Regulates cell adhesion and cell spreading (By similarity). Required for HGF-mediated lamellipodium formation, cell scattering and spreading (By similarity). Acts as a negative regulator of EPHA2 receptor endocytosis by inhibiting via PI3K-dependent Rac1 activation (By similarity). Acts as a regulator of neuritogenesis by regulating PtdIns(3,4,5)P3 level and is required to form an initial protrusive pattern, and later, maintain proper neurite outgrowth (By similarity). Acts as a negative regulator of the FC-gamma-RIIA receptor (FCGR2A) (By similarity). Mediates signaling from the FC-gamma-RIIB receptor (FCGR2B), playing a central role in terminating signal transduction from activating immune/hematopoietic cell receptor systems (By similarity). Involved in EGF signaling pathway (By similarity). Upon stimulation by EGF, it is recruited by EGFR and dephosphorylates PtdIns(3,4,5)P3 (By similarity). Plays a negative role in regulating the PI3K-PKB pathway, possibly by inhibiting PKB activity (By similarity). Down-regulates Fc-gamma-R-mediated phagocytosis in macrophages independently of INPP5D/SHIP1 (By similarity). In macrophages, down-regulates NF-kappa-B-dependent gene transcription by regulating macrophage colony-stimulating factor (M-CSF)-induced signaling (By similarity). Plays a role in the localization of AURKA and NEDD9/HEF1 to the basolateral membrane at interphase in polarized cysts, thereby mediates cell cycle homeostasis, cell polarization and cilia assembly (PubMed:27926875). Additionally promotion of cilia growth is also facilitated by hydrolysis of (PtdIns(3,4,5)P3) to PtdIns(3,4)P2 (PubMed:27926875). Promotes formation of apical membrane-initiation sites during the initial stages of lumen formation via Rho family-induced actin filament organization and CTNNB1 localization to cell-cell contacts (PubMed:27926875). May also hydrolyze PtdIns(1,3,4,5)P4, and could thus affect the levels of the higher inositol polyphosphates like InsP6. Involved in endochondral ossification (By similarity).</text>
</comment>
<comment type="catalytic activity">
    <reaction evidence="2">
        <text>a 1,2-diacyl-sn-glycero-3-phospho-(1D-myo-inositol-3,4,5-trisphosphate) + H2O = a 1,2-diacyl-sn-glycero-3-phospho-(1D-myo-inositol-3,4-bisphosphate) + phosphate</text>
        <dbReference type="Rhea" id="RHEA:25528"/>
        <dbReference type="ChEBI" id="CHEBI:15377"/>
        <dbReference type="ChEBI" id="CHEBI:43474"/>
        <dbReference type="ChEBI" id="CHEBI:57658"/>
        <dbReference type="ChEBI" id="CHEBI:57836"/>
        <dbReference type="EC" id="3.1.3.86"/>
    </reaction>
    <physiologicalReaction direction="left-to-right" evidence="2">
        <dbReference type="Rhea" id="RHEA:25529"/>
    </physiologicalReaction>
</comment>
<comment type="catalytic activity">
    <reaction evidence="2">
        <text>1,2-dioctanoyl-sn-glycero-3-phospho-(1D-myo-inositol-3,4,5-trisphosphate) + H2O = 1,2-dioctanoyl-sn-glycero-3-phospho-(1D-myo-inositol-3,4-bisphosphate) + phosphate</text>
        <dbReference type="Rhea" id="RHEA:43548"/>
        <dbReference type="ChEBI" id="CHEBI:15377"/>
        <dbReference type="ChEBI" id="CHEBI:43474"/>
        <dbReference type="ChEBI" id="CHEBI:83416"/>
        <dbReference type="ChEBI" id="CHEBI:83417"/>
    </reaction>
    <physiologicalReaction direction="left-to-right" evidence="2">
        <dbReference type="Rhea" id="RHEA:43549"/>
    </physiologicalReaction>
</comment>
<comment type="catalytic activity">
    <reaction evidence="2">
        <text>1,2-dihexadecanoyl-sn-glycero-3-phospho-(1D-myo-inositol-3,4,5-trisphosphate) + H2O = 1,2-dihexadecanoyl-sn-glycero-3-phospho-(1D-myo-inositol-3,4-bisphosphate) + phosphate</text>
        <dbReference type="Rhea" id="RHEA:43556"/>
        <dbReference type="ChEBI" id="CHEBI:15377"/>
        <dbReference type="ChEBI" id="CHEBI:43474"/>
        <dbReference type="ChEBI" id="CHEBI:83420"/>
        <dbReference type="ChEBI" id="CHEBI:83422"/>
    </reaction>
    <physiologicalReaction direction="left-to-right" evidence="2">
        <dbReference type="Rhea" id="RHEA:43557"/>
    </physiologicalReaction>
</comment>
<comment type="activity regulation">
    <text evidence="2">Activated upon translocation to the sites of synthesis of PtdIns(3,4,5)P3 in the membrane. Enzymatic activity is enhanced in the presence of phosphatidylserine.</text>
</comment>
<comment type="subunit">
    <text evidence="2 3 9">Interacts with tyrosine phosphorylated form of SHC1 (By similarity). Interacts with EGFR (By similarity). Upon stimulation by the EGF signaling pathway, it forms a complex with SHC1 and EGFR (By similarity). Interacts with cytoskeletal protein SORBS3/vinexin, promoting its localization to the periphery of cells (By similarity). Forms a complex with filamin (FLNA or FLNB), actin, GPIb (GP1BA or GP1BB) that regulates cortical and submembraneous actin (By similarity). Interacts with c-Met/MET, when c-Met/MET is phosphorylated on 'Tyr-1356' (By similarity). Interacts with p130Cas/BCAR1 (By similarity). Interacts with CENTD3/ARAP3 via its SAM domain (By similarity). Interacts with c-Cbl/CBL and CAP/SORBS1 (By similarity). Interacts with activated EPHA2 receptor (By similarity). Interacts with receptor FCGR2A (By similarity). Interacts with receptor FCGR2B (By similarity). Interacts with tyrosine kinase ABL1 (By similarity). Interacts with tyrosine kinase TEC (By similarity). Interacts with CSF1R (By similarity). Interacts (via N-terminus) with SH3YL1 (via SH3 domain) (By similarity). Interacts with FCRL6 (tyrosine phosphorylated form) (By similarity). Interacts (via SH2 domain) with tyrosine phosphorylated KLRC1 (via ITIM) (By similarity). Interacts with NEDD9/HEF1 (PubMed:27926875).</text>
</comment>
<comment type="subcellular location">
    <subcellularLocation>
        <location evidence="2">Cytoplasm</location>
        <location evidence="2">Cytosol</location>
    </subcellularLocation>
    <subcellularLocation>
        <location evidence="2">Membrane</location>
        <topology>Peripheral membrane protein</topology>
    </subcellularLocation>
    <subcellularLocation>
        <location evidence="2">Cell projection</location>
        <location evidence="2">Filopodium</location>
    </subcellularLocation>
    <subcellularLocation>
        <location evidence="2">Cell projection</location>
        <location evidence="2">Lamellipodium</location>
    </subcellularLocation>
    <subcellularLocation>
        <location evidence="9">Basal cell membrane</location>
    </subcellularLocation>
    <subcellularLocation>
        <location evidence="1">Nucleus</location>
    </subcellularLocation>
    <subcellularLocation>
        <location evidence="1">Nucleus speckle</location>
    </subcellularLocation>
    <subcellularLocation>
        <location evidence="9">Cytoplasm</location>
        <location evidence="9">Cytoskeleton</location>
        <location evidence="9">Spindle pole</location>
    </subcellularLocation>
    <text evidence="2 3">Translocates to membrane ruffles when activated, translocation is probably due to different mechanisms depending on the stimulus and cell type (By similarity). Partly translocated via its SH2 domain which mediates interaction with tyrosine phosphorylated receptors such as the FC-gamma-RIIB receptor (FCGR2B). Tyrosine phosphorylation may also participate in membrane localization. Insulin specifically stimulates its redistribution from the cytosol to the plasma membrane. Recruited to the membrane following M-CSF stimulation. In activated spreading platelets, localizes with actin at filopodia, lamellipodia and the central actin ring (By similarity).</text>
</comment>
<comment type="domain">
    <text evidence="2">The SH2 domain interacts with tyrosine phosphorylated forms of proteins such as SHC1 or FCGR2A (By similarity). It also mediates the interaction with p130Cas/BCAR1 (By similarity).</text>
</comment>
<comment type="domain">
    <text evidence="4">The NPXY sequence motif found in many tyrosine-phosphorylated proteins is required for the specific binding of the PID domain.</text>
</comment>
<comment type="PTM">
    <text evidence="2">Tyrosine phosphorylated by the members of the SRC family after exposure to a diverse array of extracellular stimuli such as insulin, growth factors such as EGF or PDGF, chemokines, integrin ligands and hypertonic and oxidative stress. May be phosphorylated upon IgG receptor FCGR2B-binding. Phosphorylated at Tyr-992 following cell attachment and spreading. Phosphorylated at Tyr-1168 following EGF signaling pathway stimulation. Phosphorylated at Thr-964 in response to PDGF.</text>
</comment>
<comment type="similarity">
    <text evidence="11">Belongs to the inositol 1,4,5-trisphosphate 5-phosphatase family.</text>
</comment>
<reference evidence="12" key="1">
    <citation type="journal article" date="2005" name="Nature">
        <title>Genome sequence, comparative analysis and haplotype structure of the domestic dog.</title>
        <authorList>
            <person name="Lindblad-Toh K."/>
            <person name="Wade C.M."/>
            <person name="Mikkelsen T.S."/>
            <person name="Karlsson E.K."/>
            <person name="Jaffe D.B."/>
            <person name="Kamal M."/>
            <person name="Clamp M."/>
            <person name="Chang J.L."/>
            <person name="Kulbokas E.J. III"/>
            <person name="Zody M.C."/>
            <person name="Mauceli E."/>
            <person name="Xie X."/>
            <person name="Breen M."/>
            <person name="Wayne R.K."/>
            <person name="Ostrander E.A."/>
            <person name="Ponting C.P."/>
            <person name="Galibert F."/>
            <person name="Smith D.R."/>
            <person name="deJong P.J."/>
            <person name="Kirkness E.F."/>
            <person name="Alvarez P."/>
            <person name="Biagi T."/>
            <person name="Brockman W."/>
            <person name="Butler J."/>
            <person name="Chin C.-W."/>
            <person name="Cook A."/>
            <person name="Cuff J."/>
            <person name="Daly M.J."/>
            <person name="DeCaprio D."/>
            <person name="Gnerre S."/>
            <person name="Grabherr M."/>
            <person name="Kellis M."/>
            <person name="Kleber M."/>
            <person name="Bardeleben C."/>
            <person name="Goodstadt L."/>
            <person name="Heger A."/>
            <person name="Hitte C."/>
            <person name="Kim L."/>
            <person name="Koepfli K.-P."/>
            <person name="Parker H.G."/>
            <person name="Pollinger J.P."/>
            <person name="Searle S.M.J."/>
            <person name="Sutter N.B."/>
            <person name="Thomas R."/>
            <person name="Webber C."/>
            <person name="Baldwin J."/>
            <person name="Abebe A."/>
            <person name="Abouelleil A."/>
            <person name="Aftuck L."/>
            <person name="Ait-Zahra M."/>
            <person name="Aldredge T."/>
            <person name="Allen N."/>
            <person name="An P."/>
            <person name="Anderson S."/>
            <person name="Antoine C."/>
            <person name="Arachchi H."/>
            <person name="Aslam A."/>
            <person name="Ayotte L."/>
            <person name="Bachantsang P."/>
            <person name="Barry A."/>
            <person name="Bayul T."/>
            <person name="Benamara M."/>
            <person name="Berlin A."/>
            <person name="Bessette D."/>
            <person name="Blitshteyn B."/>
            <person name="Bloom T."/>
            <person name="Blye J."/>
            <person name="Boguslavskiy L."/>
            <person name="Bonnet C."/>
            <person name="Boukhgalter B."/>
            <person name="Brown A."/>
            <person name="Cahill P."/>
            <person name="Calixte N."/>
            <person name="Camarata J."/>
            <person name="Cheshatsang Y."/>
            <person name="Chu J."/>
            <person name="Citroen M."/>
            <person name="Collymore A."/>
            <person name="Cooke P."/>
            <person name="Dawoe T."/>
            <person name="Daza R."/>
            <person name="Decktor K."/>
            <person name="DeGray S."/>
            <person name="Dhargay N."/>
            <person name="Dooley K."/>
            <person name="Dooley K."/>
            <person name="Dorje P."/>
            <person name="Dorjee K."/>
            <person name="Dorris L."/>
            <person name="Duffey N."/>
            <person name="Dupes A."/>
            <person name="Egbiremolen O."/>
            <person name="Elong R."/>
            <person name="Falk J."/>
            <person name="Farina A."/>
            <person name="Faro S."/>
            <person name="Ferguson D."/>
            <person name="Ferreira P."/>
            <person name="Fisher S."/>
            <person name="FitzGerald M."/>
            <person name="Foley K."/>
            <person name="Foley C."/>
            <person name="Franke A."/>
            <person name="Friedrich D."/>
            <person name="Gage D."/>
            <person name="Garber M."/>
            <person name="Gearin G."/>
            <person name="Giannoukos G."/>
            <person name="Goode T."/>
            <person name="Goyette A."/>
            <person name="Graham J."/>
            <person name="Grandbois E."/>
            <person name="Gyaltsen K."/>
            <person name="Hafez N."/>
            <person name="Hagopian D."/>
            <person name="Hagos B."/>
            <person name="Hall J."/>
            <person name="Healy C."/>
            <person name="Hegarty R."/>
            <person name="Honan T."/>
            <person name="Horn A."/>
            <person name="Houde N."/>
            <person name="Hughes L."/>
            <person name="Hunnicutt L."/>
            <person name="Husby M."/>
            <person name="Jester B."/>
            <person name="Jones C."/>
            <person name="Kamat A."/>
            <person name="Kanga B."/>
            <person name="Kells C."/>
            <person name="Khazanovich D."/>
            <person name="Kieu A.C."/>
            <person name="Kisner P."/>
            <person name="Kumar M."/>
            <person name="Lance K."/>
            <person name="Landers T."/>
            <person name="Lara M."/>
            <person name="Lee W."/>
            <person name="Leger J.-P."/>
            <person name="Lennon N."/>
            <person name="Leuper L."/>
            <person name="LeVine S."/>
            <person name="Liu J."/>
            <person name="Liu X."/>
            <person name="Lokyitsang Y."/>
            <person name="Lokyitsang T."/>
            <person name="Lui A."/>
            <person name="Macdonald J."/>
            <person name="Major J."/>
            <person name="Marabella R."/>
            <person name="Maru K."/>
            <person name="Matthews C."/>
            <person name="McDonough S."/>
            <person name="Mehta T."/>
            <person name="Meldrim J."/>
            <person name="Melnikov A."/>
            <person name="Meneus L."/>
            <person name="Mihalev A."/>
            <person name="Mihova T."/>
            <person name="Miller K."/>
            <person name="Mittelman R."/>
            <person name="Mlenga V."/>
            <person name="Mulrain L."/>
            <person name="Munson G."/>
            <person name="Navidi A."/>
            <person name="Naylor J."/>
            <person name="Nguyen T."/>
            <person name="Nguyen N."/>
            <person name="Nguyen C."/>
            <person name="Nguyen T."/>
            <person name="Nicol R."/>
            <person name="Norbu N."/>
            <person name="Norbu C."/>
            <person name="Novod N."/>
            <person name="Nyima T."/>
            <person name="Olandt P."/>
            <person name="O'Neill B."/>
            <person name="O'Neill K."/>
            <person name="Osman S."/>
            <person name="Oyono L."/>
            <person name="Patti C."/>
            <person name="Perrin D."/>
            <person name="Phunkhang P."/>
            <person name="Pierre F."/>
            <person name="Priest M."/>
            <person name="Rachupka A."/>
            <person name="Raghuraman S."/>
            <person name="Rameau R."/>
            <person name="Ray V."/>
            <person name="Raymond C."/>
            <person name="Rege F."/>
            <person name="Rise C."/>
            <person name="Rogers J."/>
            <person name="Rogov P."/>
            <person name="Sahalie J."/>
            <person name="Settipalli S."/>
            <person name="Sharpe T."/>
            <person name="Shea T."/>
            <person name="Sheehan M."/>
            <person name="Sherpa N."/>
            <person name="Shi J."/>
            <person name="Shih D."/>
            <person name="Sloan J."/>
            <person name="Smith C."/>
            <person name="Sparrow T."/>
            <person name="Stalker J."/>
            <person name="Stange-Thomann N."/>
            <person name="Stavropoulos S."/>
            <person name="Stone C."/>
            <person name="Stone S."/>
            <person name="Sykes S."/>
            <person name="Tchuinga P."/>
            <person name="Tenzing P."/>
            <person name="Tesfaye S."/>
            <person name="Thoulutsang D."/>
            <person name="Thoulutsang Y."/>
            <person name="Topham K."/>
            <person name="Topping I."/>
            <person name="Tsamla T."/>
            <person name="Vassiliev H."/>
            <person name="Venkataraman V."/>
            <person name="Vo A."/>
            <person name="Wangchuk T."/>
            <person name="Wangdi T."/>
            <person name="Weiand M."/>
            <person name="Wilkinson J."/>
            <person name="Wilson A."/>
            <person name="Yadav S."/>
            <person name="Yang S."/>
            <person name="Yang X."/>
            <person name="Young G."/>
            <person name="Yu Q."/>
            <person name="Zainoun J."/>
            <person name="Zembek L."/>
            <person name="Zimmer A."/>
            <person name="Lander E.S."/>
        </authorList>
    </citation>
    <scope>NUCLEOTIDE SEQUENCE [LARGE SCALE GENOMIC DNA]</scope>
    <source>
        <strain evidence="12">Boxer</strain>
    </source>
</reference>
<reference evidence="11" key="2">
    <citation type="journal article" date="2016" name="Cell Rep.">
        <title>SHIP2 Regulates Lumen Generation, Cell Division, and Ciliogenesis through the Control of Basolateral to Apical Lumen Localization of Aurora A and HEF 1.</title>
        <authorList>
            <person name="Hamze-Komaiha O."/>
            <person name="Sarr S."/>
            <person name="Arlot-Bonnemains Y."/>
            <person name="Samuel D."/>
            <person name="Gassama-Diagne A."/>
        </authorList>
    </citation>
    <scope>FUNCTION</scope>
    <scope>INTERACTION WITH NEDD9</scope>
    <scope>SUBCELLULAR LOCATION</scope>
</reference>
<evidence type="ECO:0000250" key="1">
    <source>
        <dbReference type="UniProtKB" id="D7PF45"/>
    </source>
</evidence>
<evidence type="ECO:0000250" key="2">
    <source>
        <dbReference type="UniProtKB" id="O15357"/>
    </source>
</evidence>
<evidence type="ECO:0000250" key="3">
    <source>
        <dbReference type="UniProtKB" id="Q6P549"/>
    </source>
</evidence>
<evidence type="ECO:0000250" key="4">
    <source>
        <dbReference type="UniProtKB" id="Q9ES52"/>
    </source>
</evidence>
<evidence type="ECO:0000250" key="5">
    <source>
        <dbReference type="UniProtKB" id="Q9WVR3"/>
    </source>
</evidence>
<evidence type="ECO:0000255" key="6">
    <source>
        <dbReference type="PROSITE-ProRule" id="PRU00184"/>
    </source>
</evidence>
<evidence type="ECO:0000255" key="7">
    <source>
        <dbReference type="PROSITE-ProRule" id="PRU00191"/>
    </source>
</evidence>
<evidence type="ECO:0000256" key="8">
    <source>
        <dbReference type="SAM" id="MobiDB-lite"/>
    </source>
</evidence>
<evidence type="ECO:0000269" key="9">
    <source>
    </source>
</evidence>
<evidence type="ECO:0000303" key="10">
    <source>
    </source>
</evidence>
<evidence type="ECO:0000305" key="11"/>
<evidence type="ECO:0000312" key="12">
    <source>
        <dbReference type="Proteomes" id="UP000002254"/>
    </source>
</evidence>
<dbReference type="EC" id="3.1.3.86" evidence="2"/>
<dbReference type="RefSeq" id="XP_038286155.1">
    <property type="nucleotide sequence ID" value="XM_038430227.1"/>
</dbReference>
<dbReference type="RefSeq" id="XP_038424690.1">
    <property type="nucleotide sequence ID" value="XM_038568762.1"/>
</dbReference>
<dbReference type="RefSeq" id="XP_542327.3">
    <property type="nucleotide sequence ID" value="XM_542327.7"/>
</dbReference>
<dbReference type="SMR" id="A0A8I3NFE2"/>
<dbReference type="FunCoup" id="A0A8I3NFE2">
    <property type="interactions" value="289"/>
</dbReference>
<dbReference type="Ensembl" id="ENSCAFT00000009283.5">
    <property type="protein sequence ID" value="ENSCAFP00000008615.4"/>
    <property type="gene ID" value="ENSCAFG00000005743.5"/>
</dbReference>
<dbReference type="Ensembl" id="ENSCAFT00030018910.1">
    <property type="protein sequence ID" value="ENSCAFP00030016506.1"/>
    <property type="gene ID" value="ENSCAFG00030009964.1"/>
</dbReference>
<dbReference type="Ensembl" id="ENSCAFT00040036989.1">
    <property type="protein sequence ID" value="ENSCAFP00040032215.1"/>
    <property type="gene ID" value="ENSCAFG00040020007.1"/>
</dbReference>
<dbReference type="Ensembl" id="ENSCAFT00845018029.1">
    <property type="protein sequence ID" value="ENSCAFP00845014045.1"/>
    <property type="gene ID" value="ENSCAFG00845010236.1"/>
</dbReference>
<dbReference type="GeneID" id="485209"/>
<dbReference type="VGNC" id="VGNC:42037">
    <property type="gene designation" value="INPPL1"/>
</dbReference>
<dbReference type="GeneTree" id="ENSGT00940000156576"/>
<dbReference type="OrthoDB" id="7862313at2759"/>
<dbReference type="Reactome" id="R-CFA-1660499">
    <property type="pathway name" value="Synthesis of PIPs at the plasma membrane"/>
</dbReference>
<dbReference type="Reactome" id="R-CFA-1855204">
    <property type="pathway name" value="Synthesis of IP3 and IP4 in the cytosol"/>
</dbReference>
<dbReference type="Reactome" id="R-CFA-912526">
    <property type="pathway name" value="Interleukin receptor SHC signaling"/>
</dbReference>
<dbReference type="Proteomes" id="UP000002254">
    <property type="component" value="Chromosome 21"/>
</dbReference>
<dbReference type="Proteomes" id="UP000694429">
    <property type="component" value="Chromosome 21"/>
</dbReference>
<dbReference type="Proteomes" id="UP000694542">
    <property type="component" value="Chromosome 21"/>
</dbReference>
<dbReference type="Proteomes" id="UP000805418">
    <property type="component" value="Chromosome 21"/>
</dbReference>
<dbReference type="GO" id="GO:0009925">
    <property type="term" value="C:basal plasma membrane"/>
    <property type="evidence" value="ECO:0000314"/>
    <property type="project" value="UniProtKB"/>
</dbReference>
<dbReference type="GO" id="GO:0005829">
    <property type="term" value="C:cytosol"/>
    <property type="evidence" value="ECO:0000318"/>
    <property type="project" value="GO_Central"/>
</dbReference>
<dbReference type="GO" id="GO:0030175">
    <property type="term" value="C:filopodium"/>
    <property type="evidence" value="ECO:0007669"/>
    <property type="project" value="UniProtKB-SubCell"/>
</dbReference>
<dbReference type="GO" id="GO:0005794">
    <property type="term" value="C:Golgi apparatus"/>
    <property type="evidence" value="ECO:0007669"/>
    <property type="project" value="Ensembl"/>
</dbReference>
<dbReference type="GO" id="GO:0030027">
    <property type="term" value="C:lamellipodium"/>
    <property type="evidence" value="ECO:0007669"/>
    <property type="project" value="UniProtKB-SubCell"/>
</dbReference>
<dbReference type="GO" id="GO:0016607">
    <property type="term" value="C:nuclear speck"/>
    <property type="evidence" value="ECO:0007669"/>
    <property type="project" value="UniProtKB-SubCell"/>
</dbReference>
<dbReference type="GO" id="GO:0000922">
    <property type="term" value="C:spindle pole"/>
    <property type="evidence" value="ECO:0000314"/>
    <property type="project" value="UniProtKB"/>
</dbReference>
<dbReference type="GO" id="GO:0003779">
    <property type="term" value="F:actin binding"/>
    <property type="evidence" value="ECO:0007669"/>
    <property type="project" value="UniProtKB-KW"/>
</dbReference>
<dbReference type="GO" id="GO:0004445">
    <property type="term" value="F:inositol-polyphosphate 5-phosphatase activity"/>
    <property type="evidence" value="ECO:0000318"/>
    <property type="project" value="GO_Central"/>
</dbReference>
<dbReference type="GO" id="GO:0042169">
    <property type="term" value="F:SH2 domain binding"/>
    <property type="evidence" value="ECO:0007669"/>
    <property type="project" value="Ensembl"/>
</dbReference>
<dbReference type="GO" id="GO:0017124">
    <property type="term" value="F:SH3 domain binding"/>
    <property type="evidence" value="ECO:0007669"/>
    <property type="project" value="UniProtKB-KW"/>
</dbReference>
<dbReference type="GO" id="GO:0007015">
    <property type="term" value="P:actin filament organization"/>
    <property type="evidence" value="ECO:0007669"/>
    <property type="project" value="Ensembl"/>
</dbReference>
<dbReference type="GO" id="GO:0006915">
    <property type="term" value="P:apoptotic process"/>
    <property type="evidence" value="ECO:0007669"/>
    <property type="project" value="Ensembl"/>
</dbReference>
<dbReference type="GO" id="GO:0001958">
    <property type="term" value="P:endochondral ossification"/>
    <property type="evidence" value="ECO:0007669"/>
    <property type="project" value="Ensembl"/>
</dbReference>
<dbReference type="GO" id="GO:0006897">
    <property type="term" value="P:endocytosis"/>
    <property type="evidence" value="ECO:0007669"/>
    <property type="project" value="Ensembl"/>
</dbReference>
<dbReference type="GO" id="GO:0070371">
    <property type="term" value="P:ERK1 and ERK2 cascade"/>
    <property type="evidence" value="ECO:0007669"/>
    <property type="project" value="Ensembl"/>
</dbReference>
<dbReference type="GO" id="GO:0000132">
    <property type="term" value="P:establishment of mitotic spindle orientation"/>
    <property type="evidence" value="ECO:0000315"/>
    <property type="project" value="UniProtKB"/>
</dbReference>
<dbReference type="GO" id="GO:0010467">
    <property type="term" value="P:gene expression"/>
    <property type="evidence" value="ECO:0007669"/>
    <property type="project" value="Ensembl"/>
</dbReference>
<dbReference type="GO" id="GO:0006006">
    <property type="term" value="P:glucose metabolic process"/>
    <property type="evidence" value="ECO:0007669"/>
    <property type="project" value="Ensembl"/>
</dbReference>
<dbReference type="GO" id="GO:0002376">
    <property type="term" value="P:immune system process"/>
    <property type="evidence" value="ECO:0007669"/>
    <property type="project" value="UniProtKB-KW"/>
</dbReference>
<dbReference type="GO" id="GO:0008285">
    <property type="term" value="P:negative regulation of cell population proliferation"/>
    <property type="evidence" value="ECO:0007669"/>
    <property type="project" value="Ensembl"/>
</dbReference>
<dbReference type="GO" id="GO:0010629">
    <property type="term" value="P:negative regulation of gene expression"/>
    <property type="evidence" value="ECO:0007669"/>
    <property type="project" value="Ensembl"/>
</dbReference>
<dbReference type="GO" id="GO:0043569">
    <property type="term" value="P:negative regulation of insulin-like growth factor receptor signaling pathway"/>
    <property type="evidence" value="ECO:0000318"/>
    <property type="project" value="GO_Central"/>
</dbReference>
<dbReference type="GO" id="GO:0043491">
    <property type="term" value="P:phosphatidylinositol 3-kinase/protein kinase B signal transduction"/>
    <property type="evidence" value="ECO:0007669"/>
    <property type="project" value="Ensembl"/>
</dbReference>
<dbReference type="GO" id="GO:0006661">
    <property type="term" value="P:phosphatidylinositol biosynthetic process"/>
    <property type="evidence" value="ECO:0007669"/>
    <property type="project" value="Ensembl"/>
</dbReference>
<dbReference type="GO" id="GO:0046856">
    <property type="term" value="P:phosphatidylinositol dephosphorylation"/>
    <property type="evidence" value="ECO:0007669"/>
    <property type="project" value="InterPro"/>
</dbReference>
<dbReference type="GO" id="GO:0009791">
    <property type="term" value="P:post-embryonic development"/>
    <property type="evidence" value="ECO:0007669"/>
    <property type="project" value="Ensembl"/>
</dbReference>
<dbReference type="GO" id="GO:0110053">
    <property type="term" value="P:regulation of actin filament organization"/>
    <property type="evidence" value="ECO:0000315"/>
    <property type="project" value="UniProtKB"/>
</dbReference>
<dbReference type="GO" id="GO:0050776">
    <property type="term" value="P:regulation of immune response"/>
    <property type="evidence" value="ECO:0000318"/>
    <property type="project" value="GO_Central"/>
</dbReference>
<dbReference type="GO" id="GO:0032880">
    <property type="term" value="P:regulation of protein localization"/>
    <property type="evidence" value="ECO:0000315"/>
    <property type="project" value="UniProtKB"/>
</dbReference>
<dbReference type="GO" id="GO:0032868">
    <property type="term" value="P:response to insulin"/>
    <property type="evidence" value="ECO:0007669"/>
    <property type="project" value="Ensembl"/>
</dbReference>
<dbReference type="GO" id="GO:0097178">
    <property type="term" value="P:ruffle assembly"/>
    <property type="evidence" value="ECO:0007669"/>
    <property type="project" value="Ensembl"/>
</dbReference>
<dbReference type="CDD" id="cd09101">
    <property type="entry name" value="INPP5c_SHIP2-INPPL1"/>
    <property type="match status" value="1"/>
</dbReference>
<dbReference type="CDD" id="cd09491">
    <property type="entry name" value="SAM_Ship2"/>
    <property type="match status" value="1"/>
</dbReference>
<dbReference type="CDD" id="cd10343">
    <property type="entry name" value="SH2_SHIP"/>
    <property type="match status" value="1"/>
</dbReference>
<dbReference type="FunFam" id="3.30.505.10:FF:000035">
    <property type="entry name" value="phosphatidylinositol 3,4,5-trisphosphate 5-phosphatase 1"/>
    <property type="match status" value="1"/>
</dbReference>
<dbReference type="FunFam" id="3.60.10.10:FF:000005">
    <property type="entry name" value="phosphatidylinositol 3,4,5-trisphosphate 5-phosphatase 1"/>
    <property type="match status" value="1"/>
</dbReference>
<dbReference type="FunFam" id="1.10.150.50:FF:000049">
    <property type="entry name" value="phosphatidylinositol 3,4,5-trisphosphate 5-phosphatase 2"/>
    <property type="match status" value="1"/>
</dbReference>
<dbReference type="Gene3D" id="3.60.10.10">
    <property type="entry name" value="Endonuclease/exonuclease/phosphatase"/>
    <property type="match status" value="1"/>
</dbReference>
<dbReference type="Gene3D" id="3.30.505.10">
    <property type="entry name" value="SH2 domain"/>
    <property type="match status" value="1"/>
</dbReference>
<dbReference type="Gene3D" id="1.10.150.50">
    <property type="entry name" value="Transcription Factor, Ets-1"/>
    <property type="match status" value="1"/>
</dbReference>
<dbReference type="InterPro" id="IPR036691">
    <property type="entry name" value="Endo/exonu/phosph_ase_sf"/>
</dbReference>
<dbReference type="InterPro" id="IPR000300">
    <property type="entry name" value="IPPc"/>
</dbReference>
<dbReference type="InterPro" id="IPR001660">
    <property type="entry name" value="SAM"/>
</dbReference>
<dbReference type="InterPro" id="IPR013761">
    <property type="entry name" value="SAM/pointed_sf"/>
</dbReference>
<dbReference type="InterPro" id="IPR000980">
    <property type="entry name" value="SH2"/>
</dbReference>
<dbReference type="InterPro" id="IPR036860">
    <property type="entry name" value="SH2_dom_sf"/>
</dbReference>
<dbReference type="PANTHER" id="PTHR46051:SF2">
    <property type="entry name" value="PHOSPHATIDYLINOSITOL 3,4,5-TRISPHOSPHATE 5-PHOSPHATASE 2"/>
    <property type="match status" value="1"/>
</dbReference>
<dbReference type="PANTHER" id="PTHR46051">
    <property type="entry name" value="SH2 DOMAIN-CONTAINING PROTEIN"/>
    <property type="match status" value="1"/>
</dbReference>
<dbReference type="Pfam" id="PF24147">
    <property type="entry name" value="C2_SHIP1-2_2nd"/>
    <property type="match status" value="1"/>
</dbReference>
<dbReference type="Pfam" id="PF24150">
    <property type="entry name" value="C2_SHIP1-2_first"/>
    <property type="match status" value="1"/>
</dbReference>
<dbReference type="Pfam" id="PF22669">
    <property type="entry name" value="Exo_endo_phos2"/>
    <property type="match status" value="1"/>
</dbReference>
<dbReference type="Pfam" id="PF00536">
    <property type="entry name" value="SAM_1"/>
    <property type="match status" value="1"/>
</dbReference>
<dbReference type="Pfam" id="PF00017">
    <property type="entry name" value="SH2"/>
    <property type="match status" value="1"/>
</dbReference>
<dbReference type="PRINTS" id="PR00401">
    <property type="entry name" value="SH2DOMAIN"/>
</dbReference>
<dbReference type="SMART" id="SM00128">
    <property type="entry name" value="IPPc"/>
    <property type="match status" value="1"/>
</dbReference>
<dbReference type="SMART" id="SM00454">
    <property type="entry name" value="SAM"/>
    <property type="match status" value="1"/>
</dbReference>
<dbReference type="SMART" id="SM00252">
    <property type="entry name" value="SH2"/>
    <property type="match status" value="1"/>
</dbReference>
<dbReference type="SUPFAM" id="SSF56219">
    <property type="entry name" value="DNase I-like"/>
    <property type="match status" value="1"/>
</dbReference>
<dbReference type="SUPFAM" id="SSF47769">
    <property type="entry name" value="SAM/Pointed domain"/>
    <property type="match status" value="1"/>
</dbReference>
<dbReference type="SUPFAM" id="SSF55550">
    <property type="entry name" value="SH2 domain"/>
    <property type="match status" value="1"/>
</dbReference>
<dbReference type="PROSITE" id="PS50105">
    <property type="entry name" value="SAM_DOMAIN"/>
    <property type="match status" value="1"/>
</dbReference>
<dbReference type="PROSITE" id="PS50001">
    <property type="entry name" value="SH2"/>
    <property type="match status" value="1"/>
</dbReference>
<keyword id="KW-0009">Actin-binding</keyword>
<keyword id="KW-1003">Cell membrane</keyword>
<keyword id="KW-0966">Cell projection</keyword>
<keyword id="KW-0963">Cytoplasm</keyword>
<keyword id="KW-0206">Cytoskeleton</keyword>
<keyword id="KW-0378">Hydrolase</keyword>
<keyword id="KW-0391">Immunity</keyword>
<keyword id="KW-0443">Lipid metabolism</keyword>
<keyword id="KW-0472">Membrane</keyword>
<keyword id="KW-0539">Nucleus</keyword>
<keyword id="KW-0597">Phosphoprotein</keyword>
<keyword id="KW-1185">Reference proteome</keyword>
<keyword id="KW-0727">SH2 domain</keyword>
<keyword id="KW-0729">SH3-binding</keyword>
<feature type="chain" id="PRO_0000456707" description="Phosphatidylinositol 3,4,5-trisphosphate 5-phosphatase 2">
    <location>
        <begin position="1"/>
        <end position="1264"/>
    </location>
</feature>
<feature type="domain" description="SH2" evidence="7">
    <location>
        <begin position="26"/>
        <end position="122"/>
    </location>
</feature>
<feature type="domain" description="SAM" evidence="6">
    <location>
        <begin position="1210"/>
        <end position="1264"/>
    </location>
</feature>
<feature type="region of interest" description="Disordered" evidence="8">
    <location>
        <begin position="124"/>
        <end position="182"/>
    </location>
</feature>
<feature type="region of interest" description="Disordered" evidence="8">
    <location>
        <begin position="903"/>
        <end position="1123"/>
    </location>
</feature>
<feature type="region of interest" description="Disordered" evidence="8">
    <location>
        <begin position="1140"/>
        <end position="1178"/>
    </location>
</feature>
<feature type="short sequence motif" description="SH3-binding" evidence="2">
    <location>
        <begin position="950"/>
        <end position="955"/>
    </location>
</feature>
<feature type="short sequence motif" description="NPXY motif" evidence="2">
    <location>
        <begin position="989"/>
        <end position="992"/>
    </location>
</feature>
<feature type="compositionally biased region" description="Basic and acidic residues" evidence="8">
    <location>
        <begin position="124"/>
        <end position="137"/>
    </location>
</feature>
<feature type="compositionally biased region" description="Low complexity" evidence="8">
    <location>
        <begin position="169"/>
        <end position="180"/>
    </location>
</feature>
<feature type="compositionally biased region" description="Pro residues" evidence="8">
    <location>
        <begin position="944"/>
        <end position="954"/>
    </location>
</feature>
<feature type="compositionally biased region" description="Basic and acidic residues" evidence="8">
    <location>
        <begin position="957"/>
        <end position="971"/>
    </location>
</feature>
<feature type="compositionally biased region" description="Pro residues" evidence="8">
    <location>
        <begin position="1002"/>
        <end position="1017"/>
    </location>
</feature>
<feature type="compositionally biased region" description="Pro residues" evidence="8">
    <location>
        <begin position="1054"/>
        <end position="1065"/>
    </location>
</feature>
<feature type="compositionally biased region" description="Pro residues" evidence="8">
    <location>
        <begin position="1093"/>
        <end position="1110"/>
    </location>
</feature>
<feature type="modified residue" description="Phosphoserine" evidence="2">
    <location>
        <position position="137"/>
    </location>
</feature>
<feature type="modified residue" description="Phosphothreonine" evidence="2">
    <location>
        <position position="170"/>
    </location>
</feature>
<feature type="modified residue" description="Phosphoserine" evidence="2">
    <location>
        <position position="246"/>
    </location>
</feature>
<feature type="modified residue" description="Phosphoserine" evidence="2">
    <location>
        <position position="358"/>
    </location>
</feature>
<feature type="modified residue" description="Phosphotyrosine" evidence="2">
    <location>
        <position position="892"/>
    </location>
</feature>
<feature type="modified residue" description="Phosphoserine" evidence="2">
    <location>
        <position position="896"/>
    </location>
</feature>
<feature type="modified residue" description="Phosphothreonine" evidence="2">
    <location>
        <position position="964"/>
    </location>
</feature>
<feature type="modified residue" description="Phosphotyrosine" evidence="2">
    <location>
        <position position="992"/>
    </location>
</feature>
<feature type="modified residue" description="Phosphoserine" evidence="2">
    <location>
        <position position="1137"/>
    </location>
</feature>
<feature type="modified residue" description="Phosphotyrosine" evidence="2">
    <location>
        <position position="1141"/>
    </location>
</feature>
<feature type="modified residue" description="Phosphotyrosine" evidence="2">
    <location>
        <position position="1168"/>
    </location>
</feature>
<feature type="modified residue" description="Phosphoserine" evidence="2">
    <location>
        <position position="1263"/>
    </location>
</feature>
<sequence>MASACGAPGPGGAGPGGALGSPAPAWYHRDLSRAAAEELLARAGRDGSFLVRDSESVAGAFALCVLYQKHVHTYRILPDGEDFLAVQTSQGVPVRRFQTLGELIGLYAQPNQGLVCALLLPVEREREPDPPDDRDVSDGEDEKPPLPPRSGSTSISAPVGPGSPPAAPETPTTPAAESAPNGLSTVSHEYLKGSYGLDLEAVRGGASNLPHLTRTLATSCRRLHSEVDKVLAGLEILSKVFDQQSSPMVTRLLQQQNPAQTGEQELESLVLKLSVLKDFLSGIQKKALKVLQDMSSTAPPAPPQPAIRKAKTVPVQAFEVKLDVTLGDLTKIGKSQKFTLSVDVEGGRLVLLRRQRDSQEDWTTFTHDRIRQLIKSQRVQNKLGVVFEKEKDRTQRKDFIFVSARKREAFCQLLQLMKNKHSKQDEPDMISVFIGSWNMGSVPPPKNVTSWFTSKGLGKTLDEVTVTIPHDIYVFGTQENSVGDREWLDLLRGGLKELTDLDYRPIAMQSLWNIKVAVLVKPEHENRISHVSTSSVKTGIANTLGNKGAVGVSFMFNGTSFGFVNCHLTSGNEKTARRNQNYLDILRLLSLGDRQLSAFDISLRFTHLFWFGDLNYRLDMDIQEILNYISRKEFEPLLRVDQLNLEREKHKVFLRFSEEEISFPPTYRYERGSRDTYAWHKQKPTGVRTNVPSWCDRILWKSYPETHIICNSYGCTDDIVTSDHSPVFGTFEVGVTSQFISKKGLSKTSDQAYIEFESIEAIVKTASRTKFFIEFYSTCLEEYKKSFENDAQSSDNINFLKVQWSSRQLPTLKPILADIEYLQDQHLLLTVKSMDGYESYGECVVALKSMIGSTAQQFLTFLSHRGEETGNIRGSMKVRVPTERLGTRERLYEWISIDKDEAGAKSKAPSVSRGSQDPRSGNRKPAPAEASCPLSKLFEEPEKPPPTGRPPAPPRAASREEPLTPRLKAEGAPEPEGVAAPPPKNSFNNPAYYVLEGVPHQLLPPEPPSPARAPVPPATKNKVAITVPAPQLGRHRPPRVGEGSSSDEESGGTLPPPDFPPPPLPDSAIFLPPSLDPLPGPVVRGRSGGEARGPPPPKAHPRPPLPPGPSPTSTFLGEVASGDDRSCSVLQMAKTLSEVDYAPAGPGRSVLLPGPLELQPPRGLPSDYGRPLSFPPPRIRESIQEDLAEEAPCPQGGRAGGLGEAGMGAWLRAIGLERYEEGLVHNGWDDLEFLSDITEEDLEEAGVQDPAHKRLLLDTLQLSK</sequence>
<protein>
    <recommendedName>
        <fullName evidence="11">Phosphatidylinositol 3,4,5-trisphosphate 5-phosphatase 2</fullName>
        <ecNumber evidence="2">3.1.3.86</ecNumber>
    </recommendedName>
    <alternativeName>
        <fullName evidence="2">Inositol polyphosphate phosphatase-like protein 1</fullName>
        <shortName evidence="2">INPPL-1</shortName>
    </alternativeName>
    <alternativeName>
        <fullName evidence="2">Protein 51C</fullName>
    </alternativeName>
    <alternativeName>
        <fullName evidence="2">SH2 domain-containing inositol 5'-phosphatase 2</fullName>
        <shortName evidence="2">SH2 domain-containing inositol phosphatase 2</shortName>
        <shortName evidence="2">SHIP-2</shortName>
    </alternativeName>
</protein>
<accession>A0A8I3NFE2</accession>
<accession>A0A8C0MWD2</accession>